<dbReference type="EMBL" id="CR380959">
    <property type="protein sequence ID" value="CAG62715.1"/>
    <property type="molecule type" value="Genomic_DNA"/>
</dbReference>
<dbReference type="RefSeq" id="XP_449739.1">
    <property type="nucleotide sequence ID" value="XM_449739.1"/>
</dbReference>
<dbReference type="SMR" id="Q6FJ55"/>
<dbReference type="FunCoup" id="Q6FJ55">
    <property type="interactions" value="257"/>
</dbReference>
<dbReference type="STRING" id="284593.Q6FJ55"/>
<dbReference type="EnsemblFungi" id="CAGL0M09064g-T">
    <property type="protein sequence ID" value="CAGL0M09064g-T-p1"/>
    <property type="gene ID" value="CAGL0M09064g"/>
</dbReference>
<dbReference type="KEGG" id="cgr:2891301"/>
<dbReference type="CGD" id="CAL0136771">
    <property type="gene designation" value="CAGL0M09064g"/>
</dbReference>
<dbReference type="VEuPathDB" id="FungiDB:CAGL0M09064g"/>
<dbReference type="eggNOG" id="KOG1049">
    <property type="taxonomic scope" value="Eukaryota"/>
</dbReference>
<dbReference type="HOGENOM" id="CLU_039307_2_1_1"/>
<dbReference type="InParanoid" id="Q6FJ55"/>
<dbReference type="OMA" id="GFNEYTW"/>
<dbReference type="Proteomes" id="UP000002428">
    <property type="component" value="Chromosome M"/>
</dbReference>
<dbReference type="GO" id="GO:0005847">
    <property type="term" value="C:mRNA cleavage and polyadenylation specificity factor complex"/>
    <property type="evidence" value="ECO:0007669"/>
    <property type="project" value="EnsemblFungi"/>
</dbReference>
<dbReference type="GO" id="GO:0030674">
    <property type="term" value="F:protein-macromolecule adaptor activity"/>
    <property type="evidence" value="ECO:0007669"/>
    <property type="project" value="EnsemblFungi"/>
</dbReference>
<dbReference type="GO" id="GO:0003723">
    <property type="term" value="F:RNA binding"/>
    <property type="evidence" value="ECO:0007669"/>
    <property type="project" value="EnsemblFungi"/>
</dbReference>
<dbReference type="GO" id="GO:0006397">
    <property type="term" value="P:mRNA processing"/>
    <property type="evidence" value="ECO:0007669"/>
    <property type="project" value="UniProtKB-KW"/>
</dbReference>
<dbReference type="InterPro" id="IPR007854">
    <property type="entry name" value="Fip1_dom"/>
</dbReference>
<dbReference type="InterPro" id="IPR051187">
    <property type="entry name" value="Pre-mRNA_3'-end_processing_reg"/>
</dbReference>
<dbReference type="PANTHER" id="PTHR13484">
    <property type="entry name" value="FIP1-LIKE 1 PROTEIN"/>
    <property type="match status" value="1"/>
</dbReference>
<dbReference type="PANTHER" id="PTHR13484:SF0">
    <property type="entry name" value="PRE-MRNA 3'-END-PROCESSING FACTOR FIP1"/>
    <property type="match status" value="1"/>
</dbReference>
<dbReference type="Pfam" id="PF05182">
    <property type="entry name" value="Fip1"/>
    <property type="match status" value="1"/>
</dbReference>
<comment type="function">
    <text evidence="1">Pre-mRNA polyadenylation factor that directly interacts with poly(A) polymerase.</text>
</comment>
<comment type="subcellular location">
    <subcellularLocation>
        <location evidence="1">Nucleus</location>
    </subcellularLocation>
</comment>
<comment type="similarity">
    <text evidence="3">Belongs to the FIP1 family.</text>
</comment>
<evidence type="ECO:0000250" key="1"/>
<evidence type="ECO:0000256" key="2">
    <source>
        <dbReference type="SAM" id="MobiDB-lite"/>
    </source>
</evidence>
<evidence type="ECO:0000305" key="3"/>
<name>FIP1_CANGA</name>
<organism>
    <name type="scientific">Candida glabrata (strain ATCC 2001 / BCRC 20586 / JCM 3761 / NBRC 0622 / NRRL Y-65 / CBS 138)</name>
    <name type="common">Yeast</name>
    <name type="synonym">Nakaseomyces glabratus</name>
    <dbReference type="NCBI Taxonomy" id="284593"/>
    <lineage>
        <taxon>Eukaryota</taxon>
        <taxon>Fungi</taxon>
        <taxon>Dikarya</taxon>
        <taxon>Ascomycota</taxon>
        <taxon>Saccharomycotina</taxon>
        <taxon>Saccharomycetes</taxon>
        <taxon>Saccharomycetales</taxon>
        <taxon>Saccharomycetaceae</taxon>
        <taxon>Nakaseomyces</taxon>
    </lineage>
</organism>
<reference key="1">
    <citation type="journal article" date="2004" name="Nature">
        <title>Genome evolution in yeasts.</title>
        <authorList>
            <person name="Dujon B."/>
            <person name="Sherman D."/>
            <person name="Fischer G."/>
            <person name="Durrens P."/>
            <person name="Casaregola S."/>
            <person name="Lafontaine I."/>
            <person name="de Montigny J."/>
            <person name="Marck C."/>
            <person name="Neuveglise C."/>
            <person name="Talla E."/>
            <person name="Goffard N."/>
            <person name="Frangeul L."/>
            <person name="Aigle M."/>
            <person name="Anthouard V."/>
            <person name="Babour A."/>
            <person name="Barbe V."/>
            <person name="Barnay S."/>
            <person name="Blanchin S."/>
            <person name="Beckerich J.-M."/>
            <person name="Beyne E."/>
            <person name="Bleykasten C."/>
            <person name="Boisrame A."/>
            <person name="Boyer J."/>
            <person name="Cattolico L."/>
            <person name="Confanioleri F."/>
            <person name="de Daruvar A."/>
            <person name="Despons L."/>
            <person name="Fabre E."/>
            <person name="Fairhead C."/>
            <person name="Ferry-Dumazet H."/>
            <person name="Groppi A."/>
            <person name="Hantraye F."/>
            <person name="Hennequin C."/>
            <person name="Jauniaux N."/>
            <person name="Joyet P."/>
            <person name="Kachouri R."/>
            <person name="Kerrest A."/>
            <person name="Koszul R."/>
            <person name="Lemaire M."/>
            <person name="Lesur I."/>
            <person name="Ma L."/>
            <person name="Muller H."/>
            <person name="Nicaud J.-M."/>
            <person name="Nikolski M."/>
            <person name="Oztas S."/>
            <person name="Ozier-Kalogeropoulos O."/>
            <person name="Pellenz S."/>
            <person name="Potier S."/>
            <person name="Richard G.-F."/>
            <person name="Straub M.-L."/>
            <person name="Suleau A."/>
            <person name="Swennen D."/>
            <person name="Tekaia F."/>
            <person name="Wesolowski-Louvel M."/>
            <person name="Westhof E."/>
            <person name="Wirth B."/>
            <person name="Zeniou-Meyer M."/>
            <person name="Zivanovic Y."/>
            <person name="Bolotin-Fukuhara M."/>
            <person name="Thierry A."/>
            <person name="Bouchier C."/>
            <person name="Caudron B."/>
            <person name="Scarpelli C."/>
            <person name="Gaillardin C."/>
            <person name="Weissenbach J."/>
            <person name="Wincker P."/>
            <person name="Souciet J.-L."/>
        </authorList>
    </citation>
    <scope>NUCLEOTIDE SEQUENCE [LARGE SCALE GENOMIC DNA]</scope>
    <source>
        <strain>ATCC 2001 / BCRC 20586 / JCM 3761 / NBRC 0622 / NRRL Y-65 / CBS 138</strain>
    </source>
</reference>
<proteinExistence type="inferred from homology"/>
<protein>
    <recommendedName>
        <fullName>Pre-mRNA polyadenylation factor FIP1</fullName>
    </recommendedName>
</protein>
<accession>Q6FJ55</accession>
<gene>
    <name type="primary">FIP1</name>
    <name type="ordered locus">CAGL0M09064g</name>
</gene>
<keyword id="KW-0507">mRNA processing</keyword>
<keyword id="KW-0539">Nucleus</keyword>
<keyword id="KW-1185">Reference proteome</keyword>
<sequence>MSSSEDEDDKFLYGSDNEEPKNEKKRPREAAEDDNEGPTSDKVVSQHNNDLKRPKLAKDSLANASSDEEESGSESDSDIEFIISTGPDPHRLDSSTVPGSNNAIVTVSEGANVGGETMSKSTATATTAEISTLNALGDTEVAGTSELDNETLGPETTTKSGTSAEGIDLDKEGLYNDEPVSTIDPEVLKEKPWRQPGANISDYFNYGFNEYTWMEYLHRQEKLRQEYNPRRILMGLMTLQQQGRLDQPQGGHQSMPDNMAINNPQPTNNDNMMHKPTPPLPNFPMPPMFGGFSPFMPPGMMAPMNRMPNQNQNQGQNQNQNQNQLSK</sequence>
<feature type="chain" id="PRO_0000238510" description="Pre-mRNA polyadenylation factor FIP1">
    <location>
        <begin position="1"/>
        <end position="327"/>
    </location>
</feature>
<feature type="region of interest" description="Disordered" evidence="2">
    <location>
        <begin position="1"/>
        <end position="102"/>
    </location>
</feature>
<feature type="region of interest" description="Disordered" evidence="2">
    <location>
        <begin position="136"/>
        <end position="167"/>
    </location>
</feature>
<feature type="region of interest" description="Disordered" evidence="2">
    <location>
        <begin position="245"/>
        <end position="280"/>
    </location>
</feature>
<feature type="region of interest" description="Disordered" evidence="2">
    <location>
        <begin position="301"/>
        <end position="327"/>
    </location>
</feature>
<feature type="compositionally biased region" description="Basic and acidic residues" evidence="2">
    <location>
        <begin position="18"/>
        <end position="30"/>
    </location>
</feature>
<feature type="compositionally biased region" description="Basic and acidic residues" evidence="2">
    <location>
        <begin position="49"/>
        <end position="58"/>
    </location>
</feature>
<feature type="compositionally biased region" description="Acidic residues" evidence="2">
    <location>
        <begin position="66"/>
        <end position="79"/>
    </location>
</feature>
<feature type="compositionally biased region" description="Polar residues" evidence="2">
    <location>
        <begin position="154"/>
        <end position="163"/>
    </location>
</feature>
<feature type="compositionally biased region" description="Polar residues" evidence="2">
    <location>
        <begin position="245"/>
        <end position="271"/>
    </location>
</feature>